<proteinExistence type="inferred from homology"/>
<reference key="1">
    <citation type="journal article" date="2003" name="Proc. Natl. Acad. Sci. U.S.A.">
        <title>The complete genome sequence of the Arabidopsis and tomato pathogen Pseudomonas syringae pv. tomato DC3000.</title>
        <authorList>
            <person name="Buell C.R."/>
            <person name="Joardar V."/>
            <person name="Lindeberg M."/>
            <person name="Selengut J."/>
            <person name="Paulsen I.T."/>
            <person name="Gwinn M.L."/>
            <person name="Dodson R.J."/>
            <person name="DeBoy R.T."/>
            <person name="Durkin A.S."/>
            <person name="Kolonay J.F."/>
            <person name="Madupu R."/>
            <person name="Daugherty S.C."/>
            <person name="Brinkac L.M."/>
            <person name="Beanan M.J."/>
            <person name="Haft D.H."/>
            <person name="Nelson W.C."/>
            <person name="Davidsen T.M."/>
            <person name="Zafar N."/>
            <person name="Zhou L."/>
            <person name="Liu J."/>
            <person name="Yuan Q."/>
            <person name="Khouri H.M."/>
            <person name="Fedorova N.B."/>
            <person name="Tran B."/>
            <person name="Russell D."/>
            <person name="Berry K.J."/>
            <person name="Utterback T.R."/>
            <person name="Van Aken S.E."/>
            <person name="Feldblyum T.V."/>
            <person name="D'Ascenzo M."/>
            <person name="Deng W.-L."/>
            <person name="Ramos A.R."/>
            <person name="Alfano J.R."/>
            <person name="Cartinhour S."/>
            <person name="Chatterjee A.K."/>
            <person name="Delaney T.P."/>
            <person name="Lazarowitz S.G."/>
            <person name="Martin G.B."/>
            <person name="Schneider D.J."/>
            <person name="Tang X."/>
            <person name="Bender C.L."/>
            <person name="White O."/>
            <person name="Fraser C.M."/>
            <person name="Collmer A."/>
        </authorList>
    </citation>
    <scope>NUCLEOTIDE SEQUENCE [LARGE SCALE GENOMIC DNA]</scope>
    <source>
        <strain>ATCC BAA-871 / DC3000</strain>
    </source>
</reference>
<protein>
    <recommendedName>
        <fullName evidence="1">tRNA 5-methylaminomethyl-2-thiouridine biosynthesis bifunctional protein MnmC</fullName>
        <shortName evidence="1">tRNA mnm(5)s(2)U biosynthesis bifunctional protein</shortName>
    </recommendedName>
    <domain>
        <recommendedName>
            <fullName evidence="1">tRNA (mnm(5)s(2)U34)-methyltransferase</fullName>
            <ecNumber evidence="1">2.1.1.61</ecNumber>
        </recommendedName>
    </domain>
    <domain>
        <recommendedName>
            <fullName evidence="1">FAD-dependent cmnm(5)s(2)U34 oxidoreductase</fullName>
            <ecNumber evidence="1">1.5.-.-</ecNumber>
        </recommendedName>
    </domain>
</protein>
<accession>Q886E0</accession>
<comment type="function">
    <text evidence="1">Catalyzes the last two steps in the biosynthesis of 5-methylaminomethyl-2-thiouridine (mnm(5)s(2)U) at the wobble position (U34) in tRNA. Catalyzes the FAD-dependent demodification of cmnm(5)s(2)U34 to nm(5)s(2)U34, followed by the transfer of a methyl group from S-adenosyl-L-methionine to nm(5)s(2)U34, to form mnm(5)s(2)U34.</text>
</comment>
<comment type="catalytic activity">
    <reaction evidence="1">
        <text>5-aminomethyl-2-thiouridine(34) in tRNA + S-adenosyl-L-methionine = 5-methylaminomethyl-2-thiouridine(34) in tRNA + S-adenosyl-L-homocysteine + H(+)</text>
        <dbReference type="Rhea" id="RHEA:19569"/>
        <dbReference type="Rhea" id="RHEA-COMP:10195"/>
        <dbReference type="Rhea" id="RHEA-COMP:10197"/>
        <dbReference type="ChEBI" id="CHEBI:15378"/>
        <dbReference type="ChEBI" id="CHEBI:57856"/>
        <dbReference type="ChEBI" id="CHEBI:59789"/>
        <dbReference type="ChEBI" id="CHEBI:74454"/>
        <dbReference type="ChEBI" id="CHEBI:74455"/>
        <dbReference type="EC" id="2.1.1.61"/>
    </reaction>
</comment>
<comment type="cofactor">
    <cofactor evidence="1">
        <name>FAD</name>
        <dbReference type="ChEBI" id="CHEBI:57692"/>
    </cofactor>
</comment>
<comment type="subcellular location">
    <subcellularLocation>
        <location evidence="1">Cytoplasm</location>
    </subcellularLocation>
</comment>
<comment type="similarity">
    <text evidence="1">In the N-terminal section; belongs to the methyltransferase superfamily. tRNA (mnm(5)s(2)U34)-methyltransferase family.</text>
</comment>
<comment type="similarity">
    <text evidence="1">In the C-terminal section; belongs to the DAO family.</text>
</comment>
<dbReference type="EC" id="2.1.1.61" evidence="1"/>
<dbReference type="EC" id="1.5.-.-" evidence="1"/>
<dbReference type="EMBL" id="AE016853">
    <property type="protein sequence ID" value="AAO55159.1"/>
    <property type="molecule type" value="Genomic_DNA"/>
</dbReference>
<dbReference type="RefSeq" id="NP_791464.1">
    <property type="nucleotide sequence ID" value="NC_004578.1"/>
</dbReference>
<dbReference type="RefSeq" id="WP_011103642.1">
    <property type="nucleotide sequence ID" value="NC_004578.1"/>
</dbReference>
<dbReference type="SMR" id="Q886E0"/>
<dbReference type="STRING" id="223283.PSPTO_1639"/>
<dbReference type="GeneID" id="1183276"/>
<dbReference type="KEGG" id="pst:PSPTO_1639"/>
<dbReference type="PATRIC" id="fig|223283.9.peg.1663"/>
<dbReference type="eggNOG" id="COG0665">
    <property type="taxonomic scope" value="Bacteria"/>
</dbReference>
<dbReference type="eggNOG" id="COG4121">
    <property type="taxonomic scope" value="Bacteria"/>
</dbReference>
<dbReference type="HOGENOM" id="CLU_022427_1_0_6"/>
<dbReference type="OrthoDB" id="9786494at2"/>
<dbReference type="PhylomeDB" id="Q886E0"/>
<dbReference type="Proteomes" id="UP000002515">
    <property type="component" value="Chromosome"/>
</dbReference>
<dbReference type="GO" id="GO:0005737">
    <property type="term" value="C:cytoplasm"/>
    <property type="evidence" value="ECO:0007669"/>
    <property type="project" value="UniProtKB-SubCell"/>
</dbReference>
<dbReference type="GO" id="GO:0050660">
    <property type="term" value="F:flavin adenine dinucleotide binding"/>
    <property type="evidence" value="ECO:0007669"/>
    <property type="project" value="UniProtKB-UniRule"/>
</dbReference>
<dbReference type="GO" id="GO:0016645">
    <property type="term" value="F:oxidoreductase activity, acting on the CH-NH group of donors"/>
    <property type="evidence" value="ECO:0007669"/>
    <property type="project" value="InterPro"/>
</dbReference>
<dbReference type="GO" id="GO:0004808">
    <property type="term" value="F:tRNA (5-methylaminomethyl-2-thiouridylate)(34)-methyltransferase activity"/>
    <property type="evidence" value="ECO:0007669"/>
    <property type="project" value="UniProtKB-EC"/>
</dbReference>
<dbReference type="GO" id="GO:0032259">
    <property type="term" value="P:methylation"/>
    <property type="evidence" value="ECO:0007669"/>
    <property type="project" value="UniProtKB-KW"/>
</dbReference>
<dbReference type="GO" id="GO:0002098">
    <property type="term" value="P:tRNA wobble uridine modification"/>
    <property type="evidence" value="ECO:0007669"/>
    <property type="project" value="TreeGrafter"/>
</dbReference>
<dbReference type="Gene3D" id="3.30.9.10">
    <property type="entry name" value="D-Amino Acid Oxidase, subunit A, domain 2"/>
    <property type="match status" value="1"/>
</dbReference>
<dbReference type="Gene3D" id="3.50.50.60">
    <property type="entry name" value="FAD/NAD(P)-binding domain"/>
    <property type="match status" value="1"/>
</dbReference>
<dbReference type="Gene3D" id="3.40.50.150">
    <property type="entry name" value="Vaccinia Virus protein VP39"/>
    <property type="match status" value="1"/>
</dbReference>
<dbReference type="HAMAP" id="MF_01102">
    <property type="entry name" value="MnmC"/>
    <property type="match status" value="1"/>
</dbReference>
<dbReference type="InterPro" id="IPR006076">
    <property type="entry name" value="FAD-dep_OxRdtase"/>
</dbReference>
<dbReference type="InterPro" id="IPR036188">
    <property type="entry name" value="FAD/NAD-bd_sf"/>
</dbReference>
<dbReference type="InterPro" id="IPR008471">
    <property type="entry name" value="MnmC-like_methylTransf"/>
</dbReference>
<dbReference type="InterPro" id="IPR029063">
    <property type="entry name" value="SAM-dependent_MTases_sf"/>
</dbReference>
<dbReference type="InterPro" id="IPR023032">
    <property type="entry name" value="tRNA_MAMT_biosynth_bifunc_MnmC"/>
</dbReference>
<dbReference type="InterPro" id="IPR047785">
    <property type="entry name" value="tRNA_MNMC2"/>
</dbReference>
<dbReference type="InterPro" id="IPR017610">
    <property type="entry name" value="tRNA_S-uridine_synth_MnmC_C"/>
</dbReference>
<dbReference type="NCBIfam" id="TIGR03197">
    <property type="entry name" value="MnmC_Cterm"/>
    <property type="match status" value="1"/>
</dbReference>
<dbReference type="NCBIfam" id="NF002481">
    <property type="entry name" value="PRK01747.1-2"/>
    <property type="match status" value="1"/>
</dbReference>
<dbReference type="NCBIfam" id="NF033855">
    <property type="entry name" value="tRNA_MNMC2"/>
    <property type="match status" value="1"/>
</dbReference>
<dbReference type="PANTHER" id="PTHR13847">
    <property type="entry name" value="SARCOSINE DEHYDROGENASE-RELATED"/>
    <property type="match status" value="1"/>
</dbReference>
<dbReference type="PANTHER" id="PTHR13847:SF283">
    <property type="entry name" value="TRNA 5-METHYLAMINOMETHYL-2-THIOURIDINE BIOSYNTHESIS BIFUNCTIONAL PROTEIN MNMC"/>
    <property type="match status" value="1"/>
</dbReference>
<dbReference type="Pfam" id="PF01266">
    <property type="entry name" value="DAO"/>
    <property type="match status" value="1"/>
</dbReference>
<dbReference type="Pfam" id="PF05430">
    <property type="entry name" value="Methyltransf_30"/>
    <property type="match status" value="1"/>
</dbReference>
<dbReference type="SUPFAM" id="SSF51905">
    <property type="entry name" value="FAD/NAD(P)-binding domain"/>
    <property type="match status" value="1"/>
</dbReference>
<feature type="chain" id="PRO_0000095023" description="tRNA 5-methylaminomethyl-2-thiouridine biosynthesis bifunctional protein MnmC">
    <location>
        <begin position="1"/>
        <end position="660"/>
    </location>
</feature>
<feature type="region of interest" description="tRNA (mnm(5)s(2)U34)-methyltransferase">
    <location>
        <begin position="1"/>
        <end position="235"/>
    </location>
</feature>
<feature type="region of interest" description="FAD-dependent cmnm(5)s(2)U34 oxidoreductase">
    <location>
        <begin position="266"/>
        <end position="660"/>
    </location>
</feature>
<sequence>MTITRHARIDWDEQGNPRSHDFSDVYFSTESGLDETRHVFLVQNDLRRRFTELPVGGRLIVGETGFGTGLNFLCAWQLFDECAPVDARLHFVSVEKYPLSQGDLQRALVLWPELSRFADQLLGQYVAIHEGFQRLVFDNGRVTLTLLIGDALQMLPQLDGQIDAWFLDGFAPAKNPDMWTPELFAELARLSTPSTTIGTFTSTGWVRRSLNAAGFKMKRVPGIGHKWEVLRGAFIAWPEGVTSVPAAKPWFARPTPLAGERKALAIGAGLAGCATAQSLAQRGWQVSLLERHAAPAQEASGNPQGVLYLKLSAHGTALSQLILSGFGHTRRQLERLQRGVEWDACGVLQLTFDDKEAQRQKQLAEAFPESLLHLLDRRAAEVQSGIALNSGGLFYPEGGWVHPPALCHAQIQHANIRLIAHHQALELRRVDDQWQVWSDAQLIDSAPVVVLAGAADIKQFSQSAELPLKRIRGQITSLPQTGASAALRTVVCAEGYVAPARLGEHTLGASFDFNSVDLTPNVADHLGNLTLLQEISADLASRLEAADRPPEQLRGRAAFRCTSPDYLPIVGPLADREAFVQAYAALGKDARQVPDIACPWLDGLYVNSGHGSRGLITAPLCAELIAAWLDNEPLPLPRSVAEACHPNRFALRGLIRGGGK</sequence>
<name>MNMC_PSESM</name>
<gene>
    <name evidence="1" type="primary">mnmC</name>
    <name type="ordered locus">PSPTO_1639</name>
</gene>
<keyword id="KW-0963">Cytoplasm</keyword>
<keyword id="KW-0274">FAD</keyword>
<keyword id="KW-0285">Flavoprotein</keyword>
<keyword id="KW-0489">Methyltransferase</keyword>
<keyword id="KW-0511">Multifunctional enzyme</keyword>
<keyword id="KW-0560">Oxidoreductase</keyword>
<keyword id="KW-1185">Reference proteome</keyword>
<keyword id="KW-0949">S-adenosyl-L-methionine</keyword>
<keyword id="KW-0808">Transferase</keyword>
<keyword id="KW-0819">tRNA processing</keyword>
<organism>
    <name type="scientific">Pseudomonas syringae pv. tomato (strain ATCC BAA-871 / DC3000)</name>
    <dbReference type="NCBI Taxonomy" id="223283"/>
    <lineage>
        <taxon>Bacteria</taxon>
        <taxon>Pseudomonadati</taxon>
        <taxon>Pseudomonadota</taxon>
        <taxon>Gammaproteobacteria</taxon>
        <taxon>Pseudomonadales</taxon>
        <taxon>Pseudomonadaceae</taxon>
        <taxon>Pseudomonas</taxon>
    </lineage>
</organism>
<evidence type="ECO:0000255" key="1">
    <source>
        <dbReference type="HAMAP-Rule" id="MF_01102"/>
    </source>
</evidence>